<accession>Q0SYG9</accession>
<sequence length="213" mass="23566">MKPYQRQFIKFALSKQVLKFGEFTLKSGRKSPYFFNAGLFNTGRDLALLGRFYAEALVDSGIEFDLLFGPAYKGIPIATTTAVALAEHHDLDLPYCFNRKEAKDHGEGGNLVGSALQGRVMLVDDVITAGTAIRESMEIIQANGATLAGVLISLDRQERGRGEISAIQEVERDYNCKVISIITLKDLIAYLEEKPEMAEHLAAVKAYREEFGV</sequence>
<protein>
    <recommendedName>
        <fullName evidence="1">Orotate phosphoribosyltransferase</fullName>
        <shortName evidence="1">OPRT</shortName>
        <shortName evidence="1">OPRTase</shortName>
        <ecNumber evidence="1">2.4.2.10</ecNumber>
    </recommendedName>
</protein>
<evidence type="ECO:0000255" key="1">
    <source>
        <dbReference type="HAMAP-Rule" id="MF_01208"/>
    </source>
</evidence>
<gene>
    <name evidence="1" type="primary">pyrE</name>
    <name type="ordered locus">SFV_3888</name>
</gene>
<name>PYRE_SHIF8</name>
<keyword id="KW-0328">Glycosyltransferase</keyword>
<keyword id="KW-0460">Magnesium</keyword>
<keyword id="KW-0665">Pyrimidine biosynthesis</keyword>
<keyword id="KW-0808">Transferase</keyword>
<feature type="chain" id="PRO_1000066297" description="Orotate phosphoribosyltransferase">
    <location>
        <begin position="1"/>
        <end position="213"/>
    </location>
</feature>
<feature type="binding site" description="in other chain" evidence="1">
    <location>
        <position position="26"/>
    </location>
    <ligand>
        <name>5-phospho-alpha-D-ribose 1-diphosphate</name>
        <dbReference type="ChEBI" id="CHEBI:58017"/>
        <note>ligand shared between dimeric partners</note>
    </ligand>
</feature>
<feature type="binding site" evidence="1">
    <location>
        <begin position="34"/>
        <end position="35"/>
    </location>
    <ligand>
        <name>orotate</name>
        <dbReference type="ChEBI" id="CHEBI:30839"/>
    </ligand>
</feature>
<feature type="binding site" description="in other chain" evidence="1">
    <location>
        <begin position="72"/>
        <end position="73"/>
    </location>
    <ligand>
        <name>5-phospho-alpha-D-ribose 1-diphosphate</name>
        <dbReference type="ChEBI" id="CHEBI:58017"/>
        <note>ligand shared between dimeric partners</note>
    </ligand>
</feature>
<feature type="binding site" evidence="1">
    <location>
        <position position="99"/>
    </location>
    <ligand>
        <name>5-phospho-alpha-D-ribose 1-diphosphate</name>
        <dbReference type="ChEBI" id="CHEBI:58017"/>
        <note>ligand shared between dimeric partners</note>
    </ligand>
</feature>
<feature type="binding site" description="in other chain" evidence="1">
    <location>
        <position position="100"/>
    </location>
    <ligand>
        <name>5-phospho-alpha-D-ribose 1-diphosphate</name>
        <dbReference type="ChEBI" id="CHEBI:58017"/>
        <note>ligand shared between dimeric partners</note>
    </ligand>
</feature>
<feature type="binding site" evidence="1">
    <location>
        <position position="103"/>
    </location>
    <ligand>
        <name>5-phospho-alpha-D-ribose 1-diphosphate</name>
        <dbReference type="ChEBI" id="CHEBI:58017"/>
        <note>ligand shared between dimeric partners</note>
    </ligand>
</feature>
<feature type="binding site" evidence="1">
    <location>
        <position position="105"/>
    </location>
    <ligand>
        <name>5-phospho-alpha-D-ribose 1-diphosphate</name>
        <dbReference type="ChEBI" id="CHEBI:58017"/>
        <note>ligand shared between dimeric partners</note>
    </ligand>
</feature>
<feature type="binding site" description="in other chain" evidence="1">
    <location>
        <begin position="124"/>
        <end position="132"/>
    </location>
    <ligand>
        <name>5-phospho-alpha-D-ribose 1-diphosphate</name>
        <dbReference type="ChEBI" id="CHEBI:58017"/>
        <note>ligand shared between dimeric partners</note>
    </ligand>
</feature>
<feature type="binding site" evidence="1">
    <location>
        <position position="128"/>
    </location>
    <ligand>
        <name>orotate</name>
        <dbReference type="ChEBI" id="CHEBI:30839"/>
    </ligand>
</feature>
<feature type="binding site" evidence="1">
    <location>
        <position position="156"/>
    </location>
    <ligand>
        <name>orotate</name>
        <dbReference type="ChEBI" id="CHEBI:30839"/>
    </ligand>
</feature>
<comment type="function">
    <text evidence="1">Catalyzes the transfer of a ribosyl phosphate group from 5-phosphoribose 1-diphosphate to orotate, leading to the formation of orotidine monophosphate (OMP).</text>
</comment>
<comment type="catalytic activity">
    <reaction evidence="1">
        <text>orotidine 5'-phosphate + diphosphate = orotate + 5-phospho-alpha-D-ribose 1-diphosphate</text>
        <dbReference type="Rhea" id="RHEA:10380"/>
        <dbReference type="ChEBI" id="CHEBI:30839"/>
        <dbReference type="ChEBI" id="CHEBI:33019"/>
        <dbReference type="ChEBI" id="CHEBI:57538"/>
        <dbReference type="ChEBI" id="CHEBI:58017"/>
        <dbReference type="EC" id="2.4.2.10"/>
    </reaction>
</comment>
<comment type="cofactor">
    <cofactor evidence="1">
        <name>Mg(2+)</name>
        <dbReference type="ChEBI" id="CHEBI:18420"/>
    </cofactor>
</comment>
<comment type="pathway">
    <text evidence="1">Pyrimidine metabolism; UMP biosynthesis via de novo pathway; UMP from orotate: step 1/2.</text>
</comment>
<comment type="subunit">
    <text evidence="1">Homodimer.</text>
</comment>
<comment type="similarity">
    <text evidence="1">Belongs to the purine/pyrimidine phosphoribosyltransferase family. PyrE subfamily.</text>
</comment>
<dbReference type="EC" id="2.4.2.10" evidence="1"/>
<dbReference type="EMBL" id="CP000266">
    <property type="protein sequence ID" value="ABF05896.1"/>
    <property type="molecule type" value="Genomic_DNA"/>
</dbReference>
<dbReference type="RefSeq" id="WP_000806190.1">
    <property type="nucleotide sequence ID" value="NC_008258.1"/>
</dbReference>
<dbReference type="SMR" id="Q0SYG9"/>
<dbReference type="KEGG" id="sfv:SFV_3888"/>
<dbReference type="HOGENOM" id="CLU_074878_0_1_6"/>
<dbReference type="UniPathway" id="UPA00070">
    <property type="reaction ID" value="UER00119"/>
</dbReference>
<dbReference type="Proteomes" id="UP000000659">
    <property type="component" value="Chromosome"/>
</dbReference>
<dbReference type="GO" id="GO:0005737">
    <property type="term" value="C:cytoplasm"/>
    <property type="evidence" value="ECO:0007669"/>
    <property type="project" value="TreeGrafter"/>
</dbReference>
<dbReference type="GO" id="GO:0000287">
    <property type="term" value="F:magnesium ion binding"/>
    <property type="evidence" value="ECO:0007669"/>
    <property type="project" value="UniProtKB-UniRule"/>
</dbReference>
<dbReference type="GO" id="GO:0004588">
    <property type="term" value="F:orotate phosphoribosyltransferase activity"/>
    <property type="evidence" value="ECO:0007669"/>
    <property type="project" value="UniProtKB-UniRule"/>
</dbReference>
<dbReference type="GO" id="GO:0006207">
    <property type="term" value="P:'de novo' pyrimidine nucleobase biosynthetic process"/>
    <property type="evidence" value="ECO:0007669"/>
    <property type="project" value="TreeGrafter"/>
</dbReference>
<dbReference type="GO" id="GO:0044205">
    <property type="term" value="P:'de novo' UMP biosynthetic process"/>
    <property type="evidence" value="ECO:0007669"/>
    <property type="project" value="UniProtKB-UniRule"/>
</dbReference>
<dbReference type="GO" id="GO:0046132">
    <property type="term" value="P:pyrimidine ribonucleoside biosynthetic process"/>
    <property type="evidence" value="ECO:0007669"/>
    <property type="project" value="TreeGrafter"/>
</dbReference>
<dbReference type="CDD" id="cd06223">
    <property type="entry name" value="PRTases_typeI"/>
    <property type="match status" value="1"/>
</dbReference>
<dbReference type="FunFam" id="3.40.50.2020:FF:000008">
    <property type="entry name" value="Orotate phosphoribosyltransferase"/>
    <property type="match status" value="1"/>
</dbReference>
<dbReference type="Gene3D" id="3.40.50.2020">
    <property type="match status" value="1"/>
</dbReference>
<dbReference type="HAMAP" id="MF_01208">
    <property type="entry name" value="PyrE"/>
    <property type="match status" value="1"/>
</dbReference>
<dbReference type="InterPro" id="IPR023031">
    <property type="entry name" value="OPRT"/>
</dbReference>
<dbReference type="InterPro" id="IPR004467">
    <property type="entry name" value="Or_phspho_trans_dom"/>
</dbReference>
<dbReference type="InterPro" id="IPR000836">
    <property type="entry name" value="PRibTrfase_dom"/>
</dbReference>
<dbReference type="InterPro" id="IPR029057">
    <property type="entry name" value="PRTase-like"/>
</dbReference>
<dbReference type="NCBIfam" id="TIGR00336">
    <property type="entry name" value="pyrE"/>
    <property type="match status" value="1"/>
</dbReference>
<dbReference type="PANTHER" id="PTHR46683">
    <property type="entry name" value="OROTATE PHOSPHORIBOSYLTRANSFERASE 1-RELATED"/>
    <property type="match status" value="1"/>
</dbReference>
<dbReference type="PANTHER" id="PTHR46683:SF1">
    <property type="entry name" value="OROTATE PHOSPHORIBOSYLTRANSFERASE 1-RELATED"/>
    <property type="match status" value="1"/>
</dbReference>
<dbReference type="Pfam" id="PF00156">
    <property type="entry name" value="Pribosyltran"/>
    <property type="match status" value="1"/>
</dbReference>
<dbReference type="SUPFAM" id="SSF53271">
    <property type="entry name" value="PRTase-like"/>
    <property type="match status" value="1"/>
</dbReference>
<dbReference type="PROSITE" id="PS00103">
    <property type="entry name" value="PUR_PYR_PR_TRANSFER"/>
    <property type="match status" value="1"/>
</dbReference>
<reference key="1">
    <citation type="journal article" date="2006" name="BMC Genomics">
        <title>Complete genome sequence of Shigella flexneri 5b and comparison with Shigella flexneri 2a.</title>
        <authorList>
            <person name="Nie H."/>
            <person name="Yang F."/>
            <person name="Zhang X."/>
            <person name="Yang J."/>
            <person name="Chen L."/>
            <person name="Wang J."/>
            <person name="Xiong Z."/>
            <person name="Peng J."/>
            <person name="Sun L."/>
            <person name="Dong J."/>
            <person name="Xue Y."/>
            <person name="Xu X."/>
            <person name="Chen S."/>
            <person name="Yao Z."/>
            <person name="Shen Y."/>
            <person name="Jin Q."/>
        </authorList>
    </citation>
    <scope>NUCLEOTIDE SEQUENCE [LARGE SCALE GENOMIC DNA]</scope>
    <source>
        <strain>8401</strain>
    </source>
</reference>
<proteinExistence type="inferred from homology"/>
<organism>
    <name type="scientific">Shigella flexneri serotype 5b (strain 8401)</name>
    <dbReference type="NCBI Taxonomy" id="373384"/>
    <lineage>
        <taxon>Bacteria</taxon>
        <taxon>Pseudomonadati</taxon>
        <taxon>Pseudomonadota</taxon>
        <taxon>Gammaproteobacteria</taxon>
        <taxon>Enterobacterales</taxon>
        <taxon>Enterobacteriaceae</taxon>
        <taxon>Shigella</taxon>
    </lineage>
</organism>